<keyword id="KW-0007">Acetylation</keyword>
<keyword id="KW-0067">ATP-binding</keyword>
<keyword id="KW-0436">Ligase</keyword>
<keyword id="KW-0496">Mitochondrion</keyword>
<keyword id="KW-0547">Nucleotide-binding</keyword>
<keyword id="KW-1185">Reference proteome</keyword>
<keyword id="KW-0809">Transit peptide</keyword>
<accession>Q5XIT9</accession>
<name>MCCB_RAT</name>
<gene>
    <name type="primary">Mccc2</name>
</gene>
<evidence type="ECO:0000250" key="1"/>
<evidence type="ECO:0000250" key="2">
    <source>
        <dbReference type="UniProtKB" id="Q3ULD5"/>
    </source>
</evidence>
<evidence type="ECO:0000255" key="3"/>
<evidence type="ECO:0000255" key="4">
    <source>
        <dbReference type="PROSITE-ProRule" id="PRU01136"/>
    </source>
</evidence>
<evidence type="ECO:0000255" key="5">
    <source>
        <dbReference type="PROSITE-ProRule" id="PRU01137"/>
    </source>
</evidence>
<evidence type="ECO:0000255" key="6">
    <source>
        <dbReference type="PROSITE-ProRule" id="PRU01138"/>
    </source>
</evidence>
<evidence type="ECO:0000305" key="7"/>
<feature type="transit peptide" description="Mitochondrion" evidence="1">
    <location>
        <begin position="1"/>
        <end position="22"/>
    </location>
</feature>
<feature type="chain" id="PRO_0000284069" description="Methylcrotonoyl-CoA carboxylase beta chain, mitochondrial">
    <location>
        <begin position="23"/>
        <end position="563"/>
    </location>
</feature>
<feature type="domain" description="CoA carboxyltransferase N-terminal" evidence="4">
    <location>
        <begin position="49"/>
        <end position="306"/>
    </location>
</feature>
<feature type="domain" description="CoA carboxyltransferase C-terminal" evidence="5">
    <location>
        <begin position="309"/>
        <end position="555"/>
    </location>
</feature>
<feature type="region of interest" description="Carboxyltransferase" evidence="6">
    <location>
        <begin position="49"/>
        <end position="555"/>
    </location>
</feature>
<feature type="region of interest" description="Acyl-CoA binding" evidence="3">
    <location>
        <begin position="343"/>
        <end position="372"/>
    </location>
</feature>
<feature type="modified residue" description="N6-acetyllysine; alternate" evidence="2">
    <location>
        <position position="70"/>
    </location>
</feature>
<feature type="modified residue" description="N6-succinyllysine; alternate" evidence="2">
    <location>
        <position position="70"/>
    </location>
</feature>
<feature type="modified residue" description="N6-succinyllysine" evidence="2">
    <location>
        <position position="141"/>
    </location>
</feature>
<feature type="modified residue" description="N6-succinyllysine" evidence="2">
    <location>
        <position position="433"/>
    </location>
</feature>
<feature type="modified residue" description="N6-acetyllysine; alternate" evidence="2">
    <location>
        <position position="495"/>
    </location>
</feature>
<feature type="modified residue" description="N6-succinyllysine; alternate" evidence="2">
    <location>
        <position position="495"/>
    </location>
</feature>
<feature type="modified residue" description="N6-acetyllysine" evidence="2">
    <location>
        <position position="511"/>
    </location>
</feature>
<proteinExistence type="evidence at transcript level"/>
<organism>
    <name type="scientific">Rattus norvegicus</name>
    <name type="common">Rat</name>
    <dbReference type="NCBI Taxonomy" id="10116"/>
    <lineage>
        <taxon>Eukaryota</taxon>
        <taxon>Metazoa</taxon>
        <taxon>Chordata</taxon>
        <taxon>Craniata</taxon>
        <taxon>Vertebrata</taxon>
        <taxon>Euteleostomi</taxon>
        <taxon>Mammalia</taxon>
        <taxon>Eutheria</taxon>
        <taxon>Euarchontoglires</taxon>
        <taxon>Glires</taxon>
        <taxon>Rodentia</taxon>
        <taxon>Myomorpha</taxon>
        <taxon>Muroidea</taxon>
        <taxon>Muridae</taxon>
        <taxon>Murinae</taxon>
        <taxon>Rattus</taxon>
    </lineage>
</organism>
<sequence>MWGALRSVLRPCSRASVPRQRAYHGDAVARLGTQPDSGSSTYQENYEQMKALVNQLHERAQYVRLGGSEKARARHTSRGKLLPRDRIDNLIDPGSPFLEFSQFAGYKLYGEEEVPAGGIITGIGRVSGVECMIVANDATVKGGTYYPVTVKKHVRAQEIALQNRLPCIYLVDSGGANLPRQADTFPDRDHFGRIFYNQAIMSSKNITQIAVVMGSCTAGGAYVPAMADENIIVQRQGTIFLAGPPLVKAATGEEVSAEDLGGADLHCRRSGVTDHYALDDHHALHLTRKVVRSLNYQKKLDVTVEPSEEPLFPADELYGIVGANLKRSFDVREVIARIVDGSRFNEFKALYGDTLVTGFARIFGYPVGIIGNNGVLFSESAKKGAHFVQLCCQRNIPLLFLQNITGFMVGKDYEAEGIAKDGAKMVAAVSCAKVPKITVIIGGSYGAGNYGMCGRAYSPRFLYMWPNARISVMGGEQAATVLATVARDQRAREGKQFSSAEEAALKEPIIKRFEEEGNPYYSSARLWDDGIIDPVDTRLVLGLSISAALNAPIQRTDFGIFRM</sequence>
<reference key="1">
    <citation type="journal article" date="2004" name="Genome Res.">
        <title>The status, quality, and expansion of the NIH full-length cDNA project: the Mammalian Gene Collection (MGC).</title>
        <authorList>
            <consortium name="The MGC Project Team"/>
        </authorList>
    </citation>
    <scope>NUCLEOTIDE SEQUENCE [LARGE SCALE MRNA]</scope>
    <source>
        <tissue>Kidney</tissue>
    </source>
</reference>
<dbReference type="EC" id="6.4.1.4"/>
<dbReference type="EMBL" id="BC083581">
    <property type="protein sequence ID" value="AAH83581.1"/>
    <property type="molecule type" value="mRNA"/>
</dbReference>
<dbReference type="RefSeq" id="NP_001012177.1">
    <property type="nucleotide sequence ID" value="NM_001012177.1"/>
</dbReference>
<dbReference type="SMR" id="Q5XIT9"/>
<dbReference type="BioGRID" id="263035">
    <property type="interactions" value="2"/>
</dbReference>
<dbReference type="FunCoup" id="Q5XIT9">
    <property type="interactions" value="2071"/>
</dbReference>
<dbReference type="IntAct" id="Q5XIT9">
    <property type="interactions" value="1"/>
</dbReference>
<dbReference type="STRING" id="10116.ENSRNOP00000023900"/>
<dbReference type="iPTMnet" id="Q5XIT9"/>
<dbReference type="PhosphoSitePlus" id="Q5XIT9"/>
<dbReference type="jPOST" id="Q5XIT9"/>
<dbReference type="PaxDb" id="10116-ENSRNOP00000023900"/>
<dbReference type="Ensembl" id="ENSRNOT00000023900.6">
    <property type="protein sequence ID" value="ENSRNOP00000023900.4"/>
    <property type="gene ID" value="ENSRNOG00000017752.7"/>
</dbReference>
<dbReference type="GeneID" id="361884"/>
<dbReference type="KEGG" id="rno:361884"/>
<dbReference type="UCSC" id="RGD:1310279">
    <property type="organism name" value="rat"/>
</dbReference>
<dbReference type="AGR" id="RGD:1310279"/>
<dbReference type="CTD" id="64087"/>
<dbReference type="RGD" id="1310279">
    <property type="gene designation" value="Mccc2"/>
</dbReference>
<dbReference type="eggNOG" id="KOG0540">
    <property type="taxonomic scope" value="Eukaryota"/>
</dbReference>
<dbReference type="GeneTree" id="ENSGT00940000155949"/>
<dbReference type="HOGENOM" id="CLU_018822_0_1_1"/>
<dbReference type="InParanoid" id="Q5XIT9"/>
<dbReference type="OMA" id="GATTHCE"/>
<dbReference type="OrthoDB" id="439921at2759"/>
<dbReference type="PhylomeDB" id="Q5XIT9"/>
<dbReference type="TreeFam" id="TF300446"/>
<dbReference type="Reactome" id="R-RNO-196780">
    <property type="pathway name" value="Biotin transport and metabolism"/>
</dbReference>
<dbReference type="Reactome" id="R-RNO-70895">
    <property type="pathway name" value="Branched-chain amino acid catabolism"/>
</dbReference>
<dbReference type="UniPathway" id="UPA00363">
    <property type="reaction ID" value="UER00861"/>
</dbReference>
<dbReference type="PRO" id="PR:Q5XIT9"/>
<dbReference type="Proteomes" id="UP000002494">
    <property type="component" value="Chromosome 2"/>
</dbReference>
<dbReference type="Bgee" id="ENSRNOG00000017752">
    <property type="expression patterns" value="Expressed in stomach and 20 other cell types or tissues"/>
</dbReference>
<dbReference type="GO" id="GO:1905202">
    <property type="term" value="C:methylcrotonoyl-CoA carboxylase complex"/>
    <property type="evidence" value="ECO:0000250"/>
    <property type="project" value="UniProtKB"/>
</dbReference>
<dbReference type="GO" id="GO:0005759">
    <property type="term" value="C:mitochondrial matrix"/>
    <property type="evidence" value="ECO:0000266"/>
    <property type="project" value="RGD"/>
</dbReference>
<dbReference type="GO" id="GO:0005739">
    <property type="term" value="C:mitochondrion"/>
    <property type="evidence" value="ECO:0000266"/>
    <property type="project" value="RGD"/>
</dbReference>
<dbReference type="GO" id="GO:0005524">
    <property type="term" value="F:ATP binding"/>
    <property type="evidence" value="ECO:0007669"/>
    <property type="project" value="UniProtKB-KW"/>
</dbReference>
<dbReference type="GO" id="GO:0004485">
    <property type="term" value="F:methylcrotonoyl-CoA carboxylase activity"/>
    <property type="evidence" value="ECO:0007669"/>
    <property type="project" value="UniProtKB-EC"/>
</dbReference>
<dbReference type="GO" id="GO:0015936">
    <property type="term" value="P:coenzyme A metabolic process"/>
    <property type="evidence" value="ECO:0000314"/>
    <property type="project" value="RGD"/>
</dbReference>
<dbReference type="GO" id="GO:0006552">
    <property type="term" value="P:L-leucine catabolic process"/>
    <property type="evidence" value="ECO:0000318"/>
    <property type="project" value="GO_Central"/>
</dbReference>
<dbReference type="FunFam" id="3.90.226.10:FF:000004">
    <property type="entry name" value="Methylcrotonoyl-CoA carboxylase beta chain"/>
    <property type="match status" value="1"/>
</dbReference>
<dbReference type="FunFam" id="3.90.226.10:FF:000007">
    <property type="entry name" value="Methylcrotonoyl-CoA carboxylase subunit beta"/>
    <property type="match status" value="1"/>
</dbReference>
<dbReference type="Gene3D" id="3.90.226.10">
    <property type="entry name" value="2-enoyl-CoA Hydratase, Chain A, domain 1"/>
    <property type="match status" value="2"/>
</dbReference>
<dbReference type="InterPro" id="IPR034733">
    <property type="entry name" value="AcCoA_carboxyl_beta"/>
</dbReference>
<dbReference type="InterPro" id="IPR029045">
    <property type="entry name" value="ClpP/crotonase-like_dom_sf"/>
</dbReference>
<dbReference type="InterPro" id="IPR011763">
    <property type="entry name" value="COA_CT_C"/>
</dbReference>
<dbReference type="InterPro" id="IPR011762">
    <property type="entry name" value="COA_CT_N"/>
</dbReference>
<dbReference type="InterPro" id="IPR045190">
    <property type="entry name" value="MCCB/AccD1-like"/>
</dbReference>
<dbReference type="PANTHER" id="PTHR22855">
    <property type="entry name" value="ACETYL, PROPIONYL, PYRUVATE, AND GLUTACONYL CARBOXYLASE-RELATED"/>
    <property type="match status" value="1"/>
</dbReference>
<dbReference type="PANTHER" id="PTHR22855:SF13">
    <property type="entry name" value="METHYLCROTONOYL-COA CARBOXYLASE BETA CHAIN, MITOCHONDRIAL"/>
    <property type="match status" value="1"/>
</dbReference>
<dbReference type="Pfam" id="PF01039">
    <property type="entry name" value="Carboxyl_trans"/>
    <property type="match status" value="1"/>
</dbReference>
<dbReference type="SUPFAM" id="SSF52096">
    <property type="entry name" value="ClpP/crotonase"/>
    <property type="match status" value="2"/>
</dbReference>
<dbReference type="PROSITE" id="PS50989">
    <property type="entry name" value="COA_CT_CTER"/>
    <property type="match status" value="1"/>
</dbReference>
<dbReference type="PROSITE" id="PS50980">
    <property type="entry name" value="COA_CT_NTER"/>
    <property type="match status" value="1"/>
</dbReference>
<comment type="function">
    <text evidence="1">Carboxyltransferase subunit of the 3-methylcrotonyl-CoA carboxylase, an enzyme that catalyzes the conversion of 3-methylcrotonyl-CoA to 3-methylglutaconyl-CoA, a critical step for leucine and isovaleric acid catabolism.</text>
</comment>
<comment type="catalytic activity">
    <reaction>
        <text>3-methylbut-2-enoyl-CoA + hydrogencarbonate + ATP = 3-methyl-(2E)-glutaconyl-CoA + ADP + phosphate + H(+)</text>
        <dbReference type="Rhea" id="RHEA:13589"/>
        <dbReference type="ChEBI" id="CHEBI:15378"/>
        <dbReference type="ChEBI" id="CHEBI:17544"/>
        <dbReference type="ChEBI" id="CHEBI:30616"/>
        <dbReference type="ChEBI" id="CHEBI:43474"/>
        <dbReference type="ChEBI" id="CHEBI:57344"/>
        <dbReference type="ChEBI" id="CHEBI:57346"/>
        <dbReference type="ChEBI" id="CHEBI:456216"/>
        <dbReference type="EC" id="6.4.1.4"/>
    </reaction>
</comment>
<comment type="pathway">
    <text>Amino-acid degradation; L-leucine degradation; (S)-3-hydroxy-3-methylglutaryl-CoA from 3-isovaleryl-CoA: step 2/3.</text>
</comment>
<comment type="subunit">
    <text evidence="1">Probably a dodecamer composed of six biotin-containing alpha subunits (MCCC1) and six beta (MCCC2) subunits.</text>
</comment>
<comment type="subcellular location">
    <subcellularLocation>
        <location evidence="1">Mitochondrion matrix</location>
    </subcellularLocation>
</comment>
<comment type="similarity">
    <text evidence="7">Belongs to the AccD/PCCB family.</text>
</comment>
<protein>
    <recommendedName>
        <fullName>Methylcrotonoyl-CoA carboxylase beta chain, mitochondrial</fullName>
        <shortName>MCCase subunit beta</shortName>
        <ecNumber>6.4.1.4</ecNumber>
    </recommendedName>
    <alternativeName>
        <fullName>3-methylcrotonyl-CoA carboxylase 2</fullName>
    </alternativeName>
    <alternativeName>
        <fullName>3-methylcrotonyl-CoA carboxylase non-biotin-containing subunit</fullName>
    </alternativeName>
    <alternativeName>
        <fullName>3-methylcrotonyl-CoA:carbon dioxide ligase subunit beta</fullName>
    </alternativeName>
</protein>